<accession>Q8T6H8</accession>
<accession>Q54V81</accession>
<protein>
    <recommendedName>
        <fullName>ABC transporter C family member 1</fullName>
    </recommendedName>
    <alternativeName>
        <fullName>ABC transporter ABCC.1</fullName>
    </alternativeName>
</protein>
<organism>
    <name type="scientific">Dictyostelium discoideum</name>
    <name type="common">Social amoeba</name>
    <dbReference type="NCBI Taxonomy" id="44689"/>
    <lineage>
        <taxon>Eukaryota</taxon>
        <taxon>Amoebozoa</taxon>
        <taxon>Evosea</taxon>
        <taxon>Eumycetozoa</taxon>
        <taxon>Dictyostelia</taxon>
        <taxon>Dictyosteliales</taxon>
        <taxon>Dictyosteliaceae</taxon>
        <taxon>Dictyostelium</taxon>
    </lineage>
</organism>
<name>ABCC1_DICDI</name>
<dbReference type="EMBL" id="AF474333">
    <property type="protein sequence ID" value="AAL85704.1"/>
    <property type="molecule type" value="Genomic_DNA"/>
</dbReference>
<dbReference type="EMBL" id="AAFI02000037">
    <property type="protein sequence ID" value="EAL67072.1"/>
    <property type="molecule type" value="Genomic_DNA"/>
</dbReference>
<dbReference type="RefSeq" id="XP_641050.1">
    <property type="nucleotide sequence ID" value="XM_635958.1"/>
</dbReference>
<dbReference type="SMR" id="Q8T6H8"/>
<dbReference type="FunCoup" id="Q8T6H8">
    <property type="interactions" value="19"/>
</dbReference>
<dbReference type="STRING" id="44689.Q8T6H8"/>
<dbReference type="PaxDb" id="44689-DDB0215360"/>
<dbReference type="EnsemblProtists" id="EAL67072">
    <property type="protein sequence ID" value="EAL67072"/>
    <property type="gene ID" value="DDB_G0280541"/>
</dbReference>
<dbReference type="GeneID" id="8622608"/>
<dbReference type="KEGG" id="ddi:DDB_G0280541"/>
<dbReference type="dictyBase" id="DDB_G0280541">
    <property type="gene designation" value="abcC1"/>
</dbReference>
<dbReference type="VEuPathDB" id="AmoebaDB:DDB_G0280541"/>
<dbReference type="eggNOG" id="KOG0054">
    <property type="taxonomic scope" value="Eukaryota"/>
</dbReference>
<dbReference type="HOGENOM" id="CLU_000604_27_3_1"/>
<dbReference type="InParanoid" id="Q8T6H8"/>
<dbReference type="OMA" id="TRSFCFN"/>
<dbReference type="PhylomeDB" id="Q8T6H8"/>
<dbReference type="Reactome" id="R-DDI-114608">
    <property type="pathway name" value="Platelet degranulation"/>
</dbReference>
<dbReference type="Reactome" id="R-DDI-382556">
    <property type="pathway name" value="ABC-family proteins mediated transport"/>
</dbReference>
<dbReference type="Reactome" id="R-DDI-8856825">
    <property type="pathway name" value="Cargo recognition for clathrin-mediated endocytosis"/>
</dbReference>
<dbReference type="Reactome" id="R-DDI-8856828">
    <property type="pathway name" value="Clathrin-mediated endocytosis"/>
</dbReference>
<dbReference type="Reactome" id="R-DDI-9646399">
    <property type="pathway name" value="Aggrephagy"/>
</dbReference>
<dbReference type="Reactome" id="R-DDI-9748787">
    <property type="pathway name" value="Azathioprine ADME"/>
</dbReference>
<dbReference type="Reactome" id="R-DDI-9753281">
    <property type="pathway name" value="Paracetamol ADME"/>
</dbReference>
<dbReference type="PRO" id="PR:Q8T6H8"/>
<dbReference type="Proteomes" id="UP000002195">
    <property type="component" value="Chromosome 3"/>
</dbReference>
<dbReference type="GO" id="GO:0016020">
    <property type="term" value="C:membrane"/>
    <property type="evidence" value="ECO:0000318"/>
    <property type="project" value="GO_Central"/>
</dbReference>
<dbReference type="GO" id="GO:0140359">
    <property type="term" value="F:ABC-type transporter activity"/>
    <property type="evidence" value="ECO:0007669"/>
    <property type="project" value="InterPro"/>
</dbReference>
<dbReference type="GO" id="GO:0005524">
    <property type="term" value="F:ATP binding"/>
    <property type="evidence" value="ECO:0007669"/>
    <property type="project" value="UniProtKB-KW"/>
</dbReference>
<dbReference type="GO" id="GO:0016887">
    <property type="term" value="F:ATP hydrolysis activity"/>
    <property type="evidence" value="ECO:0007669"/>
    <property type="project" value="InterPro"/>
</dbReference>
<dbReference type="GO" id="GO:0042626">
    <property type="term" value="F:ATPase-coupled transmembrane transporter activity"/>
    <property type="evidence" value="ECO:0000318"/>
    <property type="project" value="GO_Central"/>
</dbReference>
<dbReference type="GO" id="GO:0030587">
    <property type="term" value="P:sorocarp development"/>
    <property type="evidence" value="ECO:0007669"/>
    <property type="project" value="UniProtKB-ARBA"/>
</dbReference>
<dbReference type="GO" id="GO:0055085">
    <property type="term" value="P:transmembrane transport"/>
    <property type="evidence" value="ECO:0000318"/>
    <property type="project" value="GO_Central"/>
</dbReference>
<dbReference type="CDD" id="cd18579">
    <property type="entry name" value="ABC_6TM_ABCC_D1"/>
    <property type="match status" value="1"/>
</dbReference>
<dbReference type="CDD" id="cd18580">
    <property type="entry name" value="ABC_6TM_ABCC_D2"/>
    <property type="match status" value="1"/>
</dbReference>
<dbReference type="CDD" id="cd03250">
    <property type="entry name" value="ABCC_MRP_domain1"/>
    <property type="match status" value="1"/>
</dbReference>
<dbReference type="CDD" id="cd03244">
    <property type="entry name" value="ABCC_MRP_domain2"/>
    <property type="match status" value="1"/>
</dbReference>
<dbReference type="FunFam" id="1.20.1560.10:FF:000080">
    <property type="entry name" value="ABC transporter C family member 1"/>
    <property type="match status" value="1"/>
</dbReference>
<dbReference type="FunFam" id="3.40.50.300:FF:002822">
    <property type="entry name" value="ABC transporter C family member 7"/>
    <property type="match status" value="1"/>
</dbReference>
<dbReference type="FunFam" id="1.20.1560.10:FF:000010">
    <property type="entry name" value="Multidrug resistance-associated ABC transporter"/>
    <property type="match status" value="1"/>
</dbReference>
<dbReference type="FunFam" id="3.40.50.300:FF:000610">
    <property type="entry name" value="Multidrug resistance-associated ABC transporter"/>
    <property type="match status" value="1"/>
</dbReference>
<dbReference type="Gene3D" id="1.20.1560.10">
    <property type="entry name" value="ABC transporter type 1, transmembrane domain"/>
    <property type="match status" value="2"/>
</dbReference>
<dbReference type="Gene3D" id="3.40.50.300">
    <property type="entry name" value="P-loop containing nucleotide triphosphate hydrolases"/>
    <property type="match status" value="2"/>
</dbReference>
<dbReference type="InterPro" id="IPR003593">
    <property type="entry name" value="AAA+_ATPase"/>
</dbReference>
<dbReference type="InterPro" id="IPR011527">
    <property type="entry name" value="ABC1_TM_dom"/>
</dbReference>
<dbReference type="InterPro" id="IPR036640">
    <property type="entry name" value="ABC1_TM_sf"/>
</dbReference>
<dbReference type="InterPro" id="IPR003439">
    <property type="entry name" value="ABC_transporter-like_ATP-bd"/>
</dbReference>
<dbReference type="InterPro" id="IPR017871">
    <property type="entry name" value="ABC_transporter-like_CS"/>
</dbReference>
<dbReference type="InterPro" id="IPR050173">
    <property type="entry name" value="ABC_transporter_C-like"/>
</dbReference>
<dbReference type="InterPro" id="IPR044746">
    <property type="entry name" value="ABCC_6TM_D1"/>
</dbReference>
<dbReference type="InterPro" id="IPR044726">
    <property type="entry name" value="ABCC_6TM_D2"/>
</dbReference>
<dbReference type="InterPro" id="IPR027417">
    <property type="entry name" value="P-loop_NTPase"/>
</dbReference>
<dbReference type="PANTHER" id="PTHR24223:SF172">
    <property type="entry name" value="ABC TRANSPORTER C FAMILY MEMBER 1-RELATED"/>
    <property type="match status" value="1"/>
</dbReference>
<dbReference type="PANTHER" id="PTHR24223">
    <property type="entry name" value="ATP-BINDING CASSETTE SUB-FAMILY C"/>
    <property type="match status" value="1"/>
</dbReference>
<dbReference type="Pfam" id="PF00664">
    <property type="entry name" value="ABC_membrane"/>
    <property type="match status" value="2"/>
</dbReference>
<dbReference type="Pfam" id="PF00005">
    <property type="entry name" value="ABC_tran"/>
    <property type="match status" value="2"/>
</dbReference>
<dbReference type="SMART" id="SM00382">
    <property type="entry name" value="AAA"/>
    <property type="match status" value="2"/>
</dbReference>
<dbReference type="SUPFAM" id="SSF90123">
    <property type="entry name" value="ABC transporter transmembrane region"/>
    <property type="match status" value="2"/>
</dbReference>
<dbReference type="SUPFAM" id="SSF52540">
    <property type="entry name" value="P-loop containing nucleoside triphosphate hydrolases"/>
    <property type="match status" value="2"/>
</dbReference>
<dbReference type="PROSITE" id="PS50929">
    <property type="entry name" value="ABC_TM1F"/>
    <property type="match status" value="2"/>
</dbReference>
<dbReference type="PROSITE" id="PS00211">
    <property type="entry name" value="ABC_TRANSPORTER_1"/>
    <property type="match status" value="2"/>
</dbReference>
<dbReference type="PROSITE" id="PS50893">
    <property type="entry name" value="ABC_TRANSPORTER_2"/>
    <property type="match status" value="2"/>
</dbReference>
<sequence>MLKNLRNKIKEKLTYSLLSSQEFDNNKDYYQQPCPEDNANLWSRLTFGWAQRMLISGYFNGPLEMSDINDLPKDIKVQSSIQLLNNINLNKNNNSRWPLIKHFYKQFLYRNKLTIFLQILTNILSILSPLSLKYFIQFIQSTNKERSFLAGIGYCILLLIASFSYTFSQQLLMWFAMKSSLEIKGCLSIKVYEKTLKLTTCGGKNYNPGSIMNLLSVDVGIISNFFWIEHMGIFAFSSQMIGLLALLCWVIGWSGLVGFAIMVITFPINTYIGSKIGKNLKESMGYSDKRTNLTSEFINGIRFLKMYAWEKLFLDRIEEQRSLQLKYLYKRMIFWIFAEMMKQAVNAIVLVLTFIVYSINNEITLEVAFTTISIFVSLRIPLLRLPNSIQQLQSLIPIAKRVEDFLKSPEIQQNHSSNREEEEEDEYDDDINSDGDISIHNGSFNWNQVDSNGSGNGNGNQQQQQQQQQQQQQQQQQQQQQSYTLNNINFKAPAGKLTIICGVVGSGKTSLVSGLIGEIYKVSGRVNTPNKISFTTQQSFLLSTSLRENILFGNEMNLERYKKVIEACCLAPDLLQLAAKDLTEIGERGINLSGGQKQRISLARALYANSDCYILDEPLSAVDPEVATHLFNHCIQGMMNDKTRILITHQLQFIPSADHIVVVDNGKLVQGTYSELKSKGIDFESIMKTKKLNIDNQQQQQQHEKENDIVLSDEDSNNSIKNNNNISNLIDIDEVISDENDSNLIERSKLLVDEDRNEGSVNLRVYKEYFKHGSSIPLFIMTCIVYMISQIIYQMSDFWLSTWSQRSIPDKTDKYYISIYLLFIVGFIIFLVIRYFMMAHVTFSASKNLHQSLLKSVGFASCQFFDTNPSGRILNRFSKDISDVDLLLFDLFSDVLYCGSTVLVSIGIMIYISPLIIIPFLLLIGIYYFIQRLYTESSRELKRLEAISRSPIFSLLQESFNGLVTIRSYKQQNKFISMMQDRINTNHRLSYYGFSVHRWVAVRLEFISSIVVFLAAFFSLFNSNAGFSVLSVTTALGMCSYLNWTVRQMVELEVKMNSVERIESYLNIPKEGNSKINFFRNEQQEEEEEEEEEFDFDNDDYDGFKLSKKWLTKGEIEFRNVEIKYGHSGESSLKNFTLKINQKDHIGIVGRTGAGKSTIGNGLFRMVECSKGSILIDGVDISKIGLHELRSSLGIVPQDPFIFSGTIRLNIDPFNKYTDSEIWVALEKVKLKSTISSMPLKLETMIEEGGDGLSFGQKQLLCLSRTILKNSKVVLMDEATSGIDYVTSDLIKQTINNCFKNCTMLTIAHRLDTIIDSTKIAVIDKGKLIEYDTPNNLIENQESRFSKLVKHHHNLFKEK</sequence>
<proteinExistence type="inferred from homology"/>
<gene>
    <name type="primary">abcC1</name>
    <name type="ORF">DDB_G0280541</name>
</gene>
<reference key="1">
    <citation type="journal article" date="2002" name="Eukaryot. Cell">
        <title>Evolutionary analyses of ABC transporters of Dictyostelium discoideum.</title>
        <authorList>
            <person name="Anjard C."/>
            <person name="Loomis W.F."/>
        </authorList>
    </citation>
    <scope>NUCLEOTIDE SEQUENCE [GENOMIC DNA]</scope>
    <scope>NOMENCLATURE</scope>
    <source>
        <strain>AX4</strain>
    </source>
</reference>
<reference key="2">
    <citation type="journal article" date="2005" name="Nature">
        <title>The genome of the social amoeba Dictyostelium discoideum.</title>
        <authorList>
            <person name="Eichinger L."/>
            <person name="Pachebat J.A."/>
            <person name="Gloeckner G."/>
            <person name="Rajandream M.A."/>
            <person name="Sucgang R."/>
            <person name="Berriman M."/>
            <person name="Song J."/>
            <person name="Olsen R."/>
            <person name="Szafranski K."/>
            <person name="Xu Q."/>
            <person name="Tunggal B."/>
            <person name="Kummerfeld S."/>
            <person name="Madera M."/>
            <person name="Konfortov B.A."/>
            <person name="Rivero F."/>
            <person name="Bankier A.T."/>
            <person name="Lehmann R."/>
            <person name="Hamlin N."/>
            <person name="Davies R."/>
            <person name="Gaudet P."/>
            <person name="Fey P."/>
            <person name="Pilcher K."/>
            <person name="Chen G."/>
            <person name="Saunders D."/>
            <person name="Sodergren E.J."/>
            <person name="Davis P."/>
            <person name="Kerhornou A."/>
            <person name="Nie X."/>
            <person name="Hall N."/>
            <person name="Anjard C."/>
            <person name="Hemphill L."/>
            <person name="Bason N."/>
            <person name="Farbrother P."/>
            <person name="Desany B."/>
            <person name="Just E."/>
            <person name="Morio T."/>
            <person name="Rost R."/>
            <person name="Churcher C.M."/>
            <person name="Cooper J."/>
            <person name="Haydock S."/>
            <person name="van Driessche N."/>
            <person name="Cronin A."/>
            <person name="Goodhead I."/>
            <person name="Muzny D.M."/>
            <person name="Mourier T."/>
            <person name="Pain A."/>
            <person name="Lu M."/>
            <person name="Harper D."/>
            <person name="Lindsay R."/>
            <person name="Hauser H."/>
            <person name="James K.D."/>
            <person name="Quiles M."/>
            <person name="Madan Babu M."/>
            <person name="Saito T."/>
            <person name="Buchrieser C."/>
            <person name="Wardroper A."/>
            <person name="Felder M."/>
            <person name="Thangavelu M."/>
            <person name="Johnson D."/>
            <person name="Knights A."/>
            <person name="Loulseged H."/>
            <person name="Mungall K.L."/>
            <person name="Oliver K."/>
            <person name="Price C."/>
            <person name="Quail M.A."/>
            <person name="Urushihara H."/>
            <person name="Hernandez J."/>
            <person name="Rabbinowitsch E."/>
            <person name="Steffen D."/>
            <person name="Sanders M."/>
            <person name="Ma J."/>
            <person name="Kohara Y."/>
            <person name="Sharp S."/>
            <person name="Simmonds M.N."/>
            <person name="Spiegler S."/>
            <person name="Tivey A."/>
            <person name="Sugano S."/>
            <person name="White B."/>
            <person name="Walker D."/>
            <person name="Woodward J.R."/>
            <person name="Winckler T."/>
            <person name="Tanaka Y."/>
            <person name="Shaulsky G."/>
            <person name="Schleicher M."/>
            <person name="Weinstock G.M."/>
            <person name="Rosenthal A."/>
            <person name="Cox E.C."/>
            <person name="Chisholm R.L."/>
            <person name="Gibbs R.A."/>
            <person name="Loomis W.F."/>
            <person name="Platzer M."/>
            <person name="Kay R.R."/>
            <person name="Williams J.G."/>
            <person name="Dear P.H."/>
            <person name="Noegel A.A."/>
            <person name="Barrell B.G."/>
            <person name="Kuspa A."/>
        </authorList>
    </citation>
    <scope>NUCLEOTIDE SEQUENCE [LARGE SCALE GENOMIC DNA]</scope>
    <source>
        <strain>AX4</strain>
    </source>
</reference>
<evidence type="ECO:0000255" key="1"/>
<evidence type="ECO:0000255" key="2">
    <source>
        <dbReference type="PROSITE-ProRule" id="PRU00434"/>
    </source>
</evidence>
<evidence type="ECO:0000255" key="3">
    <source>
        <dbReference type="PROSITE-ProRule" id="PRU00441"/>
    </source>
</evidence>
<evidence type="ECO:0000256" key="4">
    <source>
        <dbReference type="SAM" id="MobiDB-lite"/>
    </source>
</evidence>
<evidence type="ECO:0000305" key="5"/>
<feature type="chain" id="PRO_0000363847" description="ABC transporter C family member 1">
    <location>
        <begin position="1"/>
        <end position="1359"/>
    </location>
</feature>
<feature type="transmembrane region" description="Helical" evidence="3">
    <location>
        <begin position="119"/>
        <end position="139"/>
    </location>
</feature>
<feature type="transmembrane region" description="Helical" evidence="3">
    <location>
        <begin position="147"/>
        <end position="167"/>
    </location>
</feature>
<feature type="transmembrane region" description="Helical" evidence="3">
    <location>
        <begin position="214"/>
        <end position="234"/>
    </location>
</feature>
<feature type="transmembrane region" description="Helical" evidence="3">
    <location>
        <begin position="244"/>
        <end position="264"/>
    </location>
</feature>
<feature type="transmembrane region" description="Helical" evidence="3">
    <location>
        <begin position="332"/>
        <end position="352"/>
    </location>
</feature>
<feature type="transmembrane region" description="Helical" evidence="3">
    <location>
        <begin position="363"/>
        <end position="383"/>
    </location>
</feature>
<feature type="transmembrane region" description="Helical" evidence="3">
    <location>
        <begin position="773"/>
        <end position="793"/>
    </location>
</feature>
<feature type="transmembrane region" description="Helical" evidence="3">
    <location>
        <begin position="819"/>
        <end position="839"/>
    </location>
</feature>
<feature type="transmembrane region" description="Helical" evidence="3">
    <location>
        <begin position="884"/>
        <end position="904"/>
    </location>
</feature>
<feature type="transmembrane region" description="Helical" evidence="3">
    <location>
        <begin position="906"/>
        <end position="926"/>
    </location>
</feature>
<feature type="transmembrane region" description="Helical" evidence="3">
    <location>
        <begin position="999"/>
        <end position="1021"/>
    </location>
</feature>
<feature type="domain" description="ABC transmembrane type-1 1" evidence="3">
    <location>
        <begin position="111"/>
        <end position="394"/>
    </location>
</feature>
<feature type="domain" description="ABC transporter 1" evidence="2">
    <location>
        <begin position="470"/>
        <end position="690"/>
    </location>
</feature>
<feature type="domain" description="ABC transmembrane type-1 2" evidence="3">
    <location>
        <begin position="763"/>
        <end position="1061"/>
    </location>
</feature>
<feature type="domain" description="ABC transporter 2" evidence="2">
    <location>
        <begin position="1116"/>
        <end position="1350"/>
    </location>
</feature>
<feature type="region of interest" description="Disordered" evidence="4">
    <location>
        <begin position="409"/>
        <end position="478"/>
    </location>
</feature>
<feature type="coiled-coil region" evidence="1">
    <location>
        <begin position="1073"/>
        <end position="1102"/>
    </location>
</feature>
<feature type="compositionally biased region" description="Acidic residues" evidence="4">
    <location>
        <begin position="420"/>
        <end position="433"/>
    </location>
</feature>
<feature type="compositionally biased region" description="Polar residues" evidence="4">
    <location>
        <begin position="440"/>
        <end position="450"/>
    </location>
</feature>
<feature type="compositionally biased region" description="Low complexity" evidence="4">
    <location>
        <begin position="459"/>
        <end position="478"/>
    </location>
</feature>
<feature type="binding site" evidence="2">
    <location>
        <begin position="502"/>
        <end position="509"/>
    </location>
    <ligand>
        <name>ATP</name>
        <dbReference type="ChEBI" id="CHEBI:30616"/>
    </ligand>
</feature>
<feature type="binding site" evidence="2">
    <location>
        <begin position="1150"/>
        <end position="1157"/>
    </location>
    <ligand>
        <name>ATP</name>
        <dbReference type="ChEBI" id="CHEBI:30616"/>
    </ligand>
</feature>
<keyword id="KW-0067">ATP-binding</keyword>
<keyword id="KW-0175">Coiled coil</keyword>
<keyword id="KW-0472">Membrane</keyword>
<keyword id="KW-0547">Nucleotide-binding</keyword>
<keyword id="KW-1185">Reference proteome</keyword>
<keyword id="KW-0677">Repeat</keyword>
<keyword id="KW-0812">Transmembrane</keyword>
<keyword id="KW-1133">Transmembrane helix</keyword>
<keyword id="KW-0813">Transport</keyword>
<comment type="subcellular location">
    <subcellularLocation>
        <location evidence="3">Membrane</location>
        <topology evidence="3">Multi-pass membrane protein</topology>
    </subcellularLocation>
</comment>
<comment type="similarity">
    <text evidence="5">Belongs to the ABC transporter superfamily. ABCC family. Conjugate transporter (TC 3.A.1.208) subfamily.</text>
</comment>